<proteinExistence type="inferred from homology"/>
<evidence type="ECO:0000305" key="1"/>
<geneLocation type="mitochondrion"/>
<accession>P46801</accession>
<protein>
    <recommendedName>
        <fullName evidence="1">Large ribosomal subunit protein uL16m</fullName>
    </recommendedName>
    <alternativeName>
        <fullName>60S ribosomal protein L16, mitochondrial</fullName>
    </alternativeName>
</protein>
<sequence>MEKHLVMYLTRKSIMLLRKYPLVTEFQVSKCGSHIVKIRRDVLYPKRTKYSKYSKCRCSRGCEPDGTQLGFGRYGTKSCRAGRLSYRAIEAARRATIGQFHRAMSGQFRRNCKIWVRVLADLPITGKPAEVRMGRGKGNPTGWIARVSTGQIPFEMDGVSLSNARQAARLAAHKPCSSTKFVQWS</sequence>
<name>RM16_ORYSJ</name>
<keyword id="KW-0496">Mitochondrion</keyword>
<keyword id="KW-1185">Reference proteome</keyword>
<keyword id="KW-0687">Ribonucleoprotein</keyword>
<keyword id="KW-0689">Ribosomal protein</keyword>
<dbReference type="EMBL" id="D21251">
    <property type="protein sequence ID" value="BAA04793.1"/>
    <property type="molecule type" value="Genomic_DNA"/>
</dbReference>
<dbReference type="EMBL" id="BA000029">
    <property type="status" value="NOT_ANNOTATED_CDS"/>
    <property type="molecule type" value="Genomic_DNA"/>
</dbReference>
<dbReference type="EMBL" id="D32052">
    <property type="protein sequence ID" value="BAA06833.1"/>
    <property type="status" value="ALT_SEQ"/>
    <property type="molecule type" value="Genomic_DNA"/>
</dbReference>
<dbReference type="PIR" id="T03233">
    <property type="entry name" value="T03233"/>
</dbReference>
<dbReference type="SMR" id="P46801"/>
<dbReference type="FunCoup" id="P46801">
    <property type="interactions" value="433"/>
</dbReference>
<dbReference type="STRING" id="39947.P46801"/>
<dbReference type="PaxDb" id="39947-P46801"/>
<dbReference type="InParanoid" id="P46801"/>
<dbReference type="Proteomes" id="UP000059680">
    <property type="component" value="Mitochondrion"/>
</dbReference>
<dbReference type="GO" id="GO:0005762">
    <property type="term" value="C:mitochondrial large ribosomal subunit"/>
    <property type="evidence" value="ECO:0000318"/>
    <property type="project" value="GO_Central"/>
</dbReference>
<dbReference type="GO" id="GO:0005739">
    <property type="term" value="C:mitochondrion"/>
    <property type="evidence" value="ECO:0000250"/>
    <property type="project" value="Gramene"/>
</dbReference>
<dbReference type="GO" id="GO:0019843">
    <property type="term" value="F:rRNA binding"/>
    <property type="evidence" value="ECO:0000318"/>
    <property type="project" value="GO_Central"/>
</dbReference>
<dbReference type="GO" id="GO:0003735">
    <property type="term" value="F:structural constituent of ribosome"/>
    <property type="evidence" value="ECO:0000318"/>
    <property type="project" value="GO_Central"/>
</dbReference>
<dbReference type="GO" id="GO:0032543">
    <property type="term" value="P:mitochondrial translation"/>
    <property type="evidence" value="ECO:0000318"/>
    <property type="project" value="GO_Central"/>
</dbReference>
<dbReference type="CDD" id="cd01433">
    <property type="entry name" value="Ribosomal_L16_L10e"/>
    <property type="match status" value="1"/>
</dbReference>
<dbReference type="FunFam" id="3.90.1170.10:FF:000007">
    <property type="entry name" value="Ribosomal protein L16"/>
    <property type="match status" value="1"/>
</dbReference>
<dbReference type="Gene3D" id="3.90.1170.10">
    <property type="entry name" value="Ribosomal protein L10e/L16"/>
    <property type="match status" value="1"/>
</dbReference>
<dbReference type="InterPro" id="IPR047873">
    <property type="entry name" value="Ribosomal_uL16"/>
</dbReference>
<dbReference type="InterPro" id="IPR000114">
    <property type="entry name" value="Ribosomal_uL16_bact-type"/>
</dbReference>
<dbReference type="InterPro" id="IPR020798">
    <property type="entry name" value="Ribosomal_uL16_CS"/>
</dbReference>
<dbReference type="InterPro" id="IPR016180">
    <property type="entry name" value="Ribosomal_uL16_dom"/>
</dbReference>
<dbReference type="InterPro" id="IPR036920">
    <property type="entry name" value="Ribosomal_uL16_sf"/>
</dbReference>
<dbReference type="NCBIfam" id="TIGR01164">
    <property type="entry name" value="rplP_bact"/>
    <property type="match status" value="1"/>
</dbReference>
<dbReference type="PANTHER" id="PTHR12220">
    <property type="entry name" value="50S/60S RIBOSOMAL PROTEIN L16"/>
    <property type="match status" value="1"/>
</dbReference>
<dbReference type="PANTHER" id="PTHR12220:SF24">
    <property type="entry name" value="LARGE RIBOSOMAL SUBUNIT PROTEIN UL16M"/>
    <property type="match status" value="1"/>
</dbReference>
<dbReference type="Pfam" id="PF00252">
    <property type="entry name" value="Ribosomal_L16"/>
    <property type="match status" value="1"/>
</dbReference>
<dbReference type="PRINTS" id="PR00060">
    <property type="entry name" value="RIBOSOMALL16"/>
</dbReference>
<dbReference type="SUPFAM" id="SSF54686">
    <property type="entry name" value="Ribosomal protein L16p/L10e"/>
    <property type="match status" value="1"/>
</dbReference>
<dbReference type="PROSITE" id="PS00586">
    <property type="entry name" value="RIBOSOMAL_L16_1"/>
    <property type="match status" value="1"/>
</dbReference>
<dbReference type="PROSITE" id="PS00701">
    <property type="entry name" value="RIBOSOMAL_L16_2"/>
    <property type="match status" value="1"/>
</dbReference>
<reference key="1">
    <citation type="journal article" date="1995" name="Curr. Genet.">
        <title>The rps3-rpl16-nad3-rps12 gene cluster in rice mitochondrial DNA is transcribed from alternative promoters.</title>
        <authorList>
            <person name="Nakazono M."/>
            <person name="Itadani H."/>
            <person name="Wakasugi T."/>
            <person name="Tsutsumi N."/>
            <person name="Sugiura M."/>
            <person name="Hirai A."/>
        </authorList>
    </citation>
    <scope>NUCLEOTIDE SEQUENCE [GENOMIC DNA]</scope>
    <source>
        <strain>cv. Nipponbare</strain>
        <tissue>Leaf</tissue>
    </source>
</reference>
<reference key="2">
    <citation type="journal article" date="2002" name="Mol. Genet. Genomics">
        <title>The complete sequence of the rice (Oryza sativa L.) mitochondrial genome: frequent DNA sequence acquisition and loss during the evolution of flowering plants.</title>
        <authorList>
            <person name="Notsu Y."/>
            <person name="Masood S."/>
            <person name="Nishikawa T."/>
            <person name="Kubo N."/>
            <person name="Akiduki G."/>
            <person name="Nakazono M."/>
            <person name="Hirai A."/>
            <person name="Kadowaki K."/>
        </authorList>
    </citation>
    <scope>NUCLEOTIDE SEQUENCE [LARGE SCALE GENOMIC DNA]</scope>
    <source>
        <strain>cv. Nipponbare</strain>
    </source>
</reference>
<reference key="3">
    <citation type="journal article" date="1994" name="Plant Cell Physiol.">
        <title>Nucleotide sequence of a 28-kbp portion of rice mitochondrial DNA: the existence of many sequences that correspond to parts of mitochondrial genes in intergenic regions.</title>
        <authorList>
            <person name="Itadani H."/>
            <person name="Wakasugi T."/>
            <person name="Sugita M."/>
            <person name="Sugiura M."/>
            <person name="Nakazono M."/>
            <person name="Hirai A."/>
        </authorList>
    </citation>
    <scope>NUCLEOTIDE SEQUENCE [GENOMIC DNA] OF 42-185</scope>
    <source>
        <strain>cv. Nipponbare</strain>
    </source>
</reference>
<feature type="chain" id="PRO_0000062326" description="Large ribosomal subunit protein uL16m">
    <location>
        <begin position="1"/>
        <end position="185"/>
    </location>
</feature>
<gene>
    <name type="primary">RPL16</name>
</gene>
<organism>
    <name type="scientific">Oryza sativa subsp. japonica</name>
    <name type="common">Rice</name>
    <dbReference type="NCBI Taxonomy" id="39947"/>
    <lineage>
        <taxon>Eukaryota</taxon>
        <taxon>Viridiplantae</taxon>
        <taxon>Streptophyta</taxon>
        <taxon>Embryophyta</taxon>
        <taxon>Tracheophyta</taxon>
        <taxon>Spermatophyta</taxon>
        <taxon>Magnoliopsida</taxon>
        <taxon>Liliopsida</taxon>
        <taxon>Poales</taxon>
        <taxon>Poaceae</taxon>
        <taxon>BOP clade</taxon>
        <taxon>Oryzoideae</taxon>
        <taxon>Oryzeae</taxon>
        <taxon>Oryzinae</taxon>
        <taxon>Oryza</taxon>
        <taxon>Oryza sativa</taxon>
    </lineage>
</organism>
<comment type="subcellular location">
    <subcellularLocation>
        <location>Mitochondrion</location>
    </subcellularLocation>
</comment>
<comment type="similarity">
    <text evidence="1">Belongs to the universal ribosomal protein uL16 family.</text>
</comment>
<comment type="sequence caution" evidence="1">
    <conflict type="erroneous termination">
        <sequence resource="EMBL-CDS" id="BAA06833"/>
    </conflict>
    <text>Extended C-terminus.</text>
</comment>